<keyword id="KW-0067">ATP-binding</keyword>
<keyword id="KW-0963">Cytoplasm</keyword>
<keyword id="KW-0275">Fatty acid biosynthesis</keyword>
<keyword id="KW-0276">Fatty acid metabolism</keyword>
<keyword id="KW-0444">Lipid biosynthesis</keyword>
<keyword id="KW-0443">Lipid metabolism</keyword>
<keyword id="KW-0547">Nucleotide-binding</keyword>
<keyword id="KW-0808">Transferase</keyword>
<protein>
    <recommendedName>
        <fullName evidence="1">Acetyl-coenzyme A carboxylase carboxyl transferase subunit alpha</fullName>
        <shortName evidence="1">ACCase subunit alpha</shortName>
        <shortName evidence="1">Acetyl-CoA carboxylase carboxyltransferase subunit alpha</shortName>
        <ecNumber evidence="1">2.1.3.15</ecNumber>
    </recommendedName>
</protein>
<dbReference type="EC" id="2.1.3.15" evidence="1"/>
<dbReference type="EMBL" id="CU928158">
    <property type="protein sequence ID" value="CAQ87788.1"/>
    <property type="molecule type" value="Genomic_DNA"/>
</dbReference>
<dbReference type="RefSeq" id="WP_000055746.1">
    <property type="nucleotide sequence ID" value="NC_011740.1"/>
</dbReference>
<dbReference type="SMR" id="B7LW64"/>
<dbReference type="GeneID" id="86862695"/>
<dbReference type="KEGG" id="efe:EFER_0208"/>
<dbReference type="HOGENOM" id="CLU_015486_0_2_6"/>
<dbReference type="OrthoDB" id="9808023at2"/>
<dbReference type="UniPathway" id="UPA00655">
    <property type="reaction ID" value="UER00711"/>
</dbReference>
<dbReference type="Proteomes" id="UP000000745">
    <property type="component" value="Chromosome"/>
</dbReference>
<dbReference type="GO" id="GO:0009317">
    <property type="term" value="C:acetyl-CoA carboxylase complex"/>
    <property type="evidence" value="ECO:0007669"/>
    <property type="project" value="InterPro"/>
</dbReference>
<dbReference type="GO" id="GO:0003989">
    <property type="term" value="F:acetyl-CoA carboxylase activity"/>
    <property type="evidence" value="ECO:0007669"/>
    <property type="project" value="InterPro"/>
</dbReference>
<dbReference type="GO" id="GO:0005524">
    <property type="term" value="F:ATP binding"/>
    <property type="evidence" value="ECO:0007669"/>
    <property type="project" value="UniProtKB-KW"/>
</dbReference>
<dbReference type="GO" id="GO:0016743">
    <property type="term" value="F:carboxyl- or carbamoyltransferase activity"/>
    <property type="evidence" value="ECO:0007669"/>
    <property type="project" value="UniProtKB-UniRule"/>
</dbReference>
<dbReference type="GO" id="GO:0006633">
    <property type="term" value="P:fatty acid biosynthetic process"/>
    <property type="evidence" value="ECO:0007669"/>
    <property type="project" value="UniProtKB-KW"/>
</dbReference>
<dbReference type="GO" id="GO:2001295">
    <property type="term" value="P:malonyl-CoA biosynthetic process"/>
    <property type="evidence" value="ECO:0007669"/>
    <property type="project" value="UniProtKB-UniRule"/>
</dbReference>
<dbReference type="FunFam" id="3.90.226.10:FF:000008">
    <property type="entry name" value="Acetyl-coenzyme A carboxylase carboxyl transferase subunit alpha"/>
    <property type="match status" value="1"/>
</dbReference>
<dbReference type="Gene3D" id="3.90.226.10">
    <property type="entry name" value="2-enoyl-CoA Hydratase, Chain A, domain 1"/>
    <property type="match status" value="1"/>
</dbReference>
<dbReference type="HAMAP" id="MF_00823">
    <property type="entry name" value="AcetylCoA_CT_alpha"/>
    <property type="match status" value="1"/>
</dbReference>
<dbReference type="InterPro" id="IPR001095">
    <property type="entry name" value="Acetyl_CoA_COase_a_su"/>
</dbReference>
<dbReference type="InterPro" id="IPR029045">
    <property type="entry name" value="ClpP/crotonase-like_dom_sf"/>
</dbReference>
<dbReference type="InterPro" id="IPR011763">
    <property type="entry name" value="COA_CT_C"/>
</dbReference>
<dbReference type="NCBIfam" id="TIGR00513">
    <property type="entry name" value="accA"/>
    <property type="match status" value="1"/>
</dbReference>
<dbReference type="NCBIfam" id="NF041504">
    <property type="entry name" value="AccA_sub"/>
    <property type="match status" value="1"/>
</dbReference>
<dbReference type="NCBIfam" id="NF004344">
    <property type="entry name" value="PRK05724.1"/>
    <property type="match status" value="1"/>
</dbReference>
<dbReference type="PANTHER" id="PTHR42853">
    <property type="entry name" value="ACETYL-COENZYME A CARBOXYLASE CARBOXYL TRANSFERASE SUBUNIT ALPHA"/>
    <property type="match status" value="1"/>
</dbReference>
<dbReference type="PANTHER" id="PTHR42853:SF3">
    <property type="entry name" value="ACETYL-COENZYME A CARBOXYLASE CARBOXYL TRANSFERASE SUBUNIT ALPHA, CHLOROPLASTIC"/>
    <property type="match status" value="1"/>
</dbReference>
<dbReference type="Pfam" id="PF03255">
    <property type="entry name" value="ACCA"/>
    <property type="match status" value="1"/>
</dbReference>
<dbReference type="PRINTS" id="PR01069">
    <property type="entry name" value="ACCCTRFRASEA"/>
</dbReference>
<dbReference type="SUPFAM" id="SSF52096">
    <property type="entry name" value="ClpP/crotonase"/>
    <property type="match status" value="1"/>
</dbReference>
<dbReference type="PROSITE" id="PS50989">
    <property type="entry name" value="COA_CT_CTER"/>
    <property type="match status" value="1"/>
</dbReference>
<evidence type="ECO:0000255" key="1">
    <source>
        <dbReference type="HAMAP-Rule" id="MF_00823"/>
    </source>
</evidence>
<evidence type="ECO:0000255" key="2">
    <source>
        <dbReference type="PROSITE-ProRule" id="PRU01137"/>
    </source>
</evidence>
<comment type="function">
    <text evidence="1">Component of the acetyl coenzyme A carboxylase (ACC) complex. First, biotin carboxylase catalyzes the carboxylation of biotin on its carrier protein (BCCP) and then the CO(2) group is transferred by the carboxyltransferase to acetyl-CoA to form malonyl-CoA.</text>
</comment>
<comment type="catalytic activity">
    <reaction evidence="1">
        <text>N(6)-carboxybiotinyl-L-lysyl-[protein] + acetyl-CoA = N(6)-biotinyl-L-lysyl-[protein] + malonyl-CoA</text>
        <dbReference type="Rhea" id="RHEA:54728"/>
        <dbReference type="Rhea" id="RHEA-COMP:10505"/>
        <dbReference type="Rhea" id="RHEA-COMP:10506"/>
        <dbReference type="ChEBI" id="CHEBI:57288"/>
        <dbReference type="ChEBI" id="CHEBI:57384"/>
        <dbReference type="ChEBI" id="CHEBI:83144"/>
        <dbReference type="ChEBI" id="CHEBI:83145"/>
        <dbReference type="EC" id="2.1.3.15"/>
    </reaction>
</comment>
<comment type="pathway">
    <text evidence="1">Lipid metabolism; malonyl-CoA biosynthesis; malonyl-CoA from acetyl-CoA: step 1/1.</text>
</comment>
<comment type="subunit">
    <text evidence="1">Acetyl-CoA carboxylase is a heterohexamer composed of biotin carboxyl carrier protein (AccB), biotin carboxylase (AccC) and two subunits each of ACCase subunit alpha (AccA) and ACCase subunit beta (AccD).</text>
</comment>
<comment type="subcellular location">
    <subcellularLocation>
        <location evidence="1">Cytoplasm</location>
    </subcellularLocation>
</comment>
<comment type="similarity">
    <text evidence="1">Belongs to the AccA family.</text>
</comment>
<proteinExistence type="inferred from homology"/>
<name>ACCA_ESCF3</name>
<feature type="chain" id="PRO_1000134491" description="Acetyl-coenzyme A carboxylase carboxyl transferase subunit alpha">
    <location>
        <begin position="1"/>
        <end position="319"/>
    </location>
</feature>
<feature type="domain" description="CoA carboxyltransferase C-terminal" evidence="2">
    <location>
        <begin position="35"/>
        <end position="296"/>
    </location>
</feature>
<reference key="1">
    <citation type="journal article" date="2009" name="PLoS Genet.">
        <title>Organised genome dynamics in the Escherichia coli species results in highly diverse adaptive paths.</title>
        <authorList>
            <person name="Touchon M."/>
            <person name="Hoede C."/>
            <person name="Tenaillon O."/>
            <person name="Barbe V."/>
            <person name="Baeriswyl S."/>
            <person name="Bidet P."/>
            <person name="Bingen E."/>
            <person name="Bonacorsi S."/>
            <person name="Bouchier C."/>
            <person name="Bouvet O."/>
            <person name="Calteau A."/>
            <person name="Chiapello H."/>
            <person name="Clermont O."/>
            <person name="Cruveiller S."/>
            <person name="Danchin A."/>
            <person name="Diard M."/>
            <person name="Dossat C."/>
            <person name="Karoui M.E."/>
            <person name="Frapy E."/>
            <person name="Garry L."/>
            <person name="Ghigo J.M."/>
            <person name="Gilles A.M."/>
            <person name="Johnson J."/>
            <person name="Le Bouguenec C."/>
            <person name="Lescat M."/>
            <person name="Mangenot S."/>
            <person name="Martinez-Jehanne V."/>
            <person name="Matic I."/>
            <person name="Nassif X."/>
            <person name="Oztas S."/>
            <person name="Petit M.A."/>
            <person name="Pichon C."/>
            <person name="Rouy Z."/>
            <person name="Ruf C.S."/>
            <person name="Schneider D."/>
            <person name="Tourret J."/>
            <person name="Vacherie B."/>
            <person name="Vallenet D."/>
            <person name="Medigue C."/>
            <person name="Rocha E.P.C."/>
            <person name="Denamur E."/>
        </authorList>
    </citation>
    <scope>NUCLEOTIDE SEQUENCE [LARGE SCALE GENOMIC DNA]</scope>
    <source>
        <strain>ATCC 35469 / DSM 13698 / BCRC 15582 / CCUG 18766 / IAM 14443 / JCM 21226 / LMG 7866 / NBRC 102419 / NCTC 12128 / CDC 0568-73</strain>
    </source>
</reference>
<gene>
    <name evidence="1" type="primary">accA</name>
    <name type="ordered locus">EFER_0208</name>
</gene>
<organism>
    <name type="scientific">Escherichia fergusonii (strain ATCC 35469 / DSM 13698 / CCUG 18766 / IAM 14443 / JCM 21226 / LMG 7866 / NBRC 102419 / NCTC 12128 / CDC 0568-73)</name>
    <dbReference type="NCBI Taxonomy" id="585054"/>
    <lineage>
        <taxon>Bacteria</taxon>
        <taxon>Pseudomonadati</taxon>
        <taxon>Pseudomonadota</taxon>
        <taxon>Gammaproteobacteria</taxon>
        <taxon>Enterobacterales</taxon>
        <taxon>Enterobacteriaceae</taxon>
        <taxon>Escherichia</taxon>
    </lineage>
</organism>
<sequence length="319" mass="35288">MSLNFLDFEQPIAELEAKIDSLTAVSRQDEKLDINIDEEVHRLREKSVELTRKIFADLGAWQIAQLARHPQRPYTLDYVRLAFDEFDELAGDRAYADDKAIVGGIARLDGRPVMIIGHQKGRETKEKIRRNFGMPAPEGYRKALRLMQMAERFKMPIITFIDTPGAYPGVGAEERGQSEAIARNLREMSRLSVPTICTVIGEGGSGGALAIGVGDKVNMLQYSTYSVISPEGCASILWKSADKAPLAAEAMGIIAPRLKELKLIDSIIPEPLGGAHRNPEAMAASLKAQLLADLADLDVLSTEDLKNRRYQRLMSYGYA</sequence>
<accession>B7LW64</accession>